<accession>B3PVV4</accession>
<dbReference type="EC" id="2.1.3.15" evidence="1"/>
<dbReference type="EMBL" id="CP001074">
    <property type="protein sequence ID" value="ACE89027.1"/>
    <property type="molecule type" value="Genomic_DNA"/>
</dbReference>
<dbReference type="SMR" id="B3PVV4"/>
<dbReference type="KEGG" id="rec:RHECIAT_CH0000024"/>
<dbReference type="eggNOG" id="COG0777">
    <property type="taxonomic scope" value="Bacteria"/>
</dbReference>
<dbReference type="HOGENOM" id="CLU_015486_1_0_5"/>
<dbReference type="UniPathway" id="UPA00655">
    <property type="reaction ID" value="UER00711"/>
</dbReference>
<dbReference type="Proteomes" id="UP000008817">
    <property type="component" value="Chromosome"/>
</dbReference>
<dbReference type="GO" id="GO:0009329">
    <property type="term" value="C:acetate CoA-transferase complex"/>
    <property type="evidence" value="ECO:0007669"/>
    <property type="project" value="TreeGrafter"/>
</dbReference>
<dbReference type="GO" id="GO:0003989">
    <property type="term" value="F:acetyl-CoA carboxylase activity"/>
    <property type="evidence" value="ECO:0007669"/>
    <property type="project" value="InterPro"/>
</dbReference>
<dbReference type="GO" id="GO:0005524">
    <property type="term" value="F:ATP binding"/>
    <property type="evidence" value="ECO:0007669"/>
    <property type="project" value="UniProtKB-KW"/>
</dbReference>
<dbReference type="GO" id="GO:0016743">
    <property type="term" value="F:carboxyl- or carbamoyltransferase activity"/>
    <property type="evidence" value="ECO:0007669"/>
    <property type="project" value="UniProtKB-UniRule"/>
</dbReference>
<dbReference type="GO" id="GO:0006633">
    <property type="term" value="P:fatty acid biosynthetic process"/>
    <property type="evidence" value="ECO:0007669"/>
    <property type="project" value="UniProtKB-KW"/>
</dbReference>
<dbReference type="GO" id="GO:2001295">
    <property type="term" value="P:malonyl-CoA biosynthetic process"/>
    <property type="evidence" value="ECO:0007669"/>
    <property type="project" value="UniProtKB-UniRule"/>
</dbReference>
<dbReference type="Gene3D" id="3.90.226.10">
    <property type="entry name" value="2-enoyl-CoA Hydratase, Chain A, domain 1"/>
    <property type="match status" value="1"/>
</dbReference>
<dbReference type="HAMAP" id="MF_01395">
    <property type="entry name" value="AcetylCoA_CT_beta"/>
    <property type="match status" value="1"/>
</dbReference>
<dbReference type="InterPro" id="IPR034733">
    <property type="entry name" value="AcCoA_carboxyl_beta"/>
</dbReference>
<dbReference type="InterPro" id="IPR000438">
    <property type="entry name" value="Acetyl_CoA_COase_Trfase_b_su"/>
</dbReference>
<dbReference type="InterPro" id="IPR029045">
    <property type="entry name" value="ClpP/crotonase-like_dom_sf"/>
</dbReference>
<dbReference type="InterPro" id="IPR011762">
    <property type="entry name" value="COA_CT_N"/>
</dbReference>
<dbReference type="NCBIfam" id="TIGR00515">
    <property type="entry name" value="accD"/>
    <property type="match status" value="1"/>
</dbReference>
<dbReference type="PANTHER" id="PTHR42995">
    <property type="entry name" value="ACETYL-COENZYME A CARBOXYLASE CARBOXYL TRANSFERASE SUBUNIT BETA, CHLOROPLASTIC"/>
    <property type="match status" value="1"/>
</dbReference>
<dbReference type="PANTHER" id="PTHR42995:SF5">
    <property type="entry name" value="ACETYL-COENZYME A CARBOXYLASE CARBOXYL TRANSFERASE SUBUNIT BETA, CHLOROPLASTIC"/>
    <property type="match status" value="1"/>
</dbReference>
<dbReference type="Pfam" id="PF01039">
    <property type="entry name" value="Carboxyl_trans"/>
    <property type="match status" value="1"/>
</dbReference>
<dbReference type="PRINTS" id="PR01070">
    <property type="entry name" value="ACCCTRFRASEB"/>
</dbReference>
<dbReference type="SUPFAM" id="SSF52096">
    <property type="entry name" value="ClpP/crotonase"/>
    <property type="match status" value="1"/>
</dbReference>
<dbReference type="PROSITE" id="PS50980">
    <property type="entry name" value="COA_CT_NTER"/>
    <property type="match status" value="1"/>
</dbReference>
<name>ACCD_RHIE6</name>
<proteinExistence type="inferred from homology"/>
<comment type="function">
    <text evidence="1">Component of the acetyl coenzyme A carboxylase (ACC) complex. Biotin carboxylase (BC) catalyzes the carboxylation of biotin on its carrier protein (BCCP) and then the CO(2) group is transferred by the transcarboxylase to acetyl-CoA to form malonyl-CoA.</text>
</comment>
<comment type="catalytic activity">
    <reaction evidence="1">
        <text>N(6)-carboxybiotinyl-L-lysyl-[protein] + acetyl-CoA = N(6)-biotinyl-L-lysyl-[protein] + malonyl-CoA</text>
        <dbReference type="Rhea" id="RHEA:54728"/>
        <dbReference type="Rhea" id="RHEA-COMP:10505"/>
        <dbReference type="Rhea" id="RHEA-COMP:10506"/>
        <dbReference type="ChEBI" id="CHEBI:57288"/>
        <dbReference type="ChEBI" id="CHEBI:57384"/>
        <dbReference type="ChEBI" id="CHEBI:83144"/>
        <dbReference type="ChEBI" id="CHEBI:83145"/>
        <dbReference type="EC" id="2.1.3.15"/>
    </reaction>
</comment>
<comment type="pathway">
    <text evidence="1">Lipid metabolism; malonyl-CoA biosynthesis; malonyl-CoA from acetyl-CoA: step 1/1.</text>
</comment>
<comment type="subunit">
    <text evidence="1">Acetyl-CoA carboxylase is a heterohexamer composed of biotin carboxyl carrier protein (AccB), biotin carboxylase (AccC) and two subunits each of ACCase subunit alpha (AccA) and ACCase subunit beta (AccD).</text>
</comment>
<comment type="subcellular location">
    <subcellularLocation>
        <location evidence="1">Cytoplasm</location>
    </subcellularLocation>
</comment>
<comment type="similarity">
    <text evidence="1">Belongs to the AccD/PCCB family.</text>
</comment>
<keyword id="KW-0067">ATP-binding</keyword>
<keyword id="KW-0963">Cytoplasm</keyword>
<keyword id="KW-0275">Fatty acid biosynthesis</keyword>
<keyword id="KW-0276">Fatty acid metabolism</keyword>
<keyword id="KW-0444">Lipid biosynthesis</keyword>
<keyword id="KW-0443">Lipid metabolism</keyword>
<keyword id="KW-0547">Nucleotide-binding</keyword>
<keyword id="KW-0808">Transferase</keyword>
<sequence>MNWITNYVRPRINSMLGRREVPENLWIKCPETGEMVFHKDLESNKWVIPASGYHMKMPAKARLADLFDNGEYESLPQPKVAQDPLKFRDSKKYIDRLRDSRVKTEQEDTILAGLGKVRGLKLVAVVHEFNFIGGSLGIAAGEAIVKAFERATLEKCPLVMFPASGGARMQEGILSLMQLPRTTVAVDLLKESGQPYVVVLTNPTTGGVTASYAMLGDIHLAEPGAEIGFAGKRVIEQTLREKLPEGFQTSEYLLEHGMVDMVVKRHDIPETLARLLKILTKKPVSAANDMNGGAIALAASA</sequence>
<gene>
    <name evidence="1" type="primary">accD</name>
    <name type="ordered locus">RHECIAT_CH0000024</name>
</gene>
<protein>
    <recommendedName>
        <fullName evidence="1">Acetyl-coenzyme A carboxylase carboxyl transferase subunit beta</fullName>
        <shortName evidence="1">ACCase subunit beta</shortName>
        <shortName evidence="1">Acetyl-CoA carboxylase carboxyltransferase subunit beta</shortName>
        <ecNumber evidence="1">2.1.3.15</ecNumber>
    </recommendedName>
</protein>
<evidence type="ECO:0000255" key="1">
    <source>
        <dbReference type="HAMAP-Rule" id="MF_01395"/>
    </source>
</evidence>
<evidence type="ECO:0000255" key="2">
    <source>
        <dbReference type="PROSITE-ProRule" id="PRU01136"/>
    </source>
</evidence>
<organism>
    <name type="scientific">Rhizobium etli (strain CIAT 652)</name>
    <dbReference type="NCBI Taxonomy" id="491916"/>
    <lineage>
        <taxon>Bacteria</taxon>
        <taxon>Pseudomonadati</taxon>
        <taxon>Pseudomonadota</taxon>
        <taxon>Alphaproteobacteria</taxon>
        <taxon>Hyphomicrobiales</taxon>
        <taxon>Rhizobiaceae</taxon>
        <taxon>Rhizobium/Agrobacterium group</taxon>
        <taxon>Rhizobium</taxon>
    </lineage>
</organism>
<reference key="1">
    <citation type="journal article" date="2010" name="Appl. Environ. Microbiol.">
        <title>Conserved symbiotic plasmid DNA sequences in the multireplicon pangenomic structure of Rhizobium etli.</title>
        <authorList>
            <person name="Gonzalez V."/>
            <person name="Acosta J.L."/>
            <person name="Santamaria R.I."/>
            <person name="Bustos P."/>
            <person name="Fernandez J.L."/>
            <person name="Hernandez Gonzalez I.L."/>
            <person name="Diaz R."/>
            <person name="Flores M."/>
            <person name="Palacios R."/>
            <person name="Mora J."/>
            <person name="Davila G."/>
        </authorList>
    </citation>
    <scope>NUCLEOTIDE SEQUENCE [LARGE SCALE GENOMIC DNA]</scope>
    <source>
        <strain>CIAT 652</strain>
    </source>
</reference>
<feature type="chain" id="PRO_0000389825" description="Acetyl-coenzyme A carboxylase carboxyl transferase subunit beta">
    <location>
        <begin position="1"/>
        <end position="301"/>
    </location>
</feature>
<feature type="domain" description="CoA carboxyltransferase N-terminal" evidence="2">
    <location>
        <begin position="25"/>
        <end position="294"/>
    </location>
</feature>